<comment type="function">
    <text evidence="4">May have a structural role to stabilize the lipid body during desiccation of the seed by preventing coalescence of the oil. Probably interacts with both lipid and phospholipid moieties of lipid bodies. May also provide recognition signals for specific lipase anchorage in lipolysis during seedling growth.</text>
</comment>
<comment type="subcellular location">
    <subcellularLocation>
        <location evidence="2">Lipid droplet</location>
    </subcellularLocation>
    <subcellularLocation>
        <location evidence="1">Membrane</location>
        <topology evidence="1">Multi-pass membrane protein</topology>
    </subcellularLocation>
    <text evidence="4">Surface of oil bodies. Oleosins exist at a monolayer lipid/water interface.</text>
</comment>
<comment type="tissue specificity">
    <text evidence="2">Expressed in seeds (at protein level).</text>
</comment>
<comment type="allergen">
    <text evidence="2">Causes an allergic reaction in human. Pooled with Ara h 11 binds to IgE in 75% of the 4 peanut-allergic patients tested.</text>
</comment>
<comment type="similarity">
    <text evidence="4">Belongs to the oleosin family.</text>
</comment>
<protein>
    <recommendedName>
        <fullName evidence="4">Oleosin Ara h 10.0102</fullName>
    </recommendedName>
    <allergenName evidence="3">Ara h 10.0102</allergenName>
</protein>
<name>OL102_ARAHY</name>
<accession>Q647G4</accession>
<reference evidence="5" key="1">
    <citation type="submission" date="2004-07" db="EMBL/GenBank/DDBJ databases">
        <title>cDNA clone of peanut seed storage protein gene.</title>
        <authorList>
            <person name="Yan Y."/>
            <person name="Wang L."/>
            <person name="Huang S."/>
        </authorList>
    </citation>
    <scope>NUCLEOTIDE SEQUENCE [MRNA]</scope>
</reference>
<reference key="2">
    <citation type="journal article" date="2015" name="PLoS ONE">
        <title>Development of a novel strategy to isolate lipophilic allergens (oleosins) from peanuts.</title>
        <authorList>
            <person name="Schwager C."/>
            <person name="Kull S."/>
            <person name="Krause S."/>
            <person name="Schocker F."/>
            <person name="Petersen A."/>
            <person name="Becker W.M."/>
            <person name="Jappe U."/>
        </authorList>
    </citation>
    <scope>PROTEIN SEQUENCE OF 19-28; 118-131 AND 134-144</scope>
    <scope>SUBCELLULAR LOCATION</scope>
    <scope>TISSUE SPECIFICITY</scope>
    <scope>IDENTIFICATION BY MASS SPECTROMETRY</scope>
    <scope>ALLERGEN</scope>
    <source>
        <tissue evidence="3">Seed</tissue>
    </source>
</reference>
<organism evidence="5">
    <name type="scientific">Arachis hypogaea</name>
    <name type="common">Peanut</name>
    <dbReference type="NCBI Taxonomy" id="3818"/>
    <lineage>
        <taxon>Eukaryota</taxon>
        <taxon>Viridiplantae</taxon>
        <taxon>Streptophyta</taxon>
        <taxon>Embryophyta</taxon>
        <taxon>Tracheophyta</taxon>
        <taxon>Spermatophyta</taxon>
        <taxon>Magnoliopsida</taxon>
        <taxon>eudicotyledons</taxon>
        <taxon>Gunneridae</taxon>
        <taxon>Pentapetalae</taxon>
        <taxon>rosids</taxon>
        <taxon>fabids</taxon>
        <taxon>Fabales</taxon>
        <taxon>Fabaceae</taxon>
        <taxon>Papilionoideae</taxon>
        <taxon>50 kb inversion clade</taxon>
        <taxon>dalbergioids sensu lato</taxon>
        <taxon>Dalbergieae</taxon>
        <taxon>Pterocarpus clade</taxon>
        <taxon>Arachis</taxon>
    </lineage>
</organism>
<keyword id="KW-0020">Allergen</keyword>
<keyword id="KW-0903">Direct protein sequencing</keyword>
<keyword id="KW-0551">Lipid droplet</keyword>
<keyword id="KW-0472">Membrane</keyword>
<keyword id="KW-0812">Transmembrane</keyword>
<keyword id="KW-1133">Transmembrane helix</keyword>
<sequence>MTDRTQPHAVQVHTTAGRFGDTAAGTNRYADRGPSTSKVIAVITGLPIGGTLLLFAGLALAGTLLGLAVTTPLFILFSPVIVPATIVVGLSVAGFLTSGACGLTGLSSFSWVMNYIRQTHGSVPEQLEMAKHRMADVAGYVGQKTKDVGQ</sequence>
<proteinExistence type="evidence at protein level"/>
<feature type="chain" id="PRO_0000449840" description="Oleosin Ara h 10.0102">
    <location>
        <begin position="1"/>
        <end position="150" status="greater than"/>
    </location>
</feature>
<feature type="transmembrane region" description="Helical" evidence="1">
    <location>
        <begin position="39"/>
        <end position="59"/>
    </location>
</feature>
<feature type="transmembrane region" description="Helical" evidence="1">
    <location>
        <begin position="73"/>
        <end position="93"/>
    </location>
</feature>
<feature type="non-terminal residue" evidence="5">
    <location>
        <position position="150"/>
    </location>
</feature>
<dbReference type="EMBL" id="AY722695">
    <property type="protein sequence ID" value="AAU21500.1"/>
    <property type="molecule type" value="mRNA"/>
</dbReference>
<dbReference type="Allergome" id="5758">
    <property type="allergen name" value="Ara h 10"/>
</dbReference>
<dbReference type="Allergome" id="5872">
    <property type="allergen name" value="Ara h 10.0102"/>
</dbReference>
<dbReference type="GO" id="GO:0016020">
    <property type="term" value="C:membrane"/>
    <property type="evidence" value="ECO:0007669"/>
    <property type="project" value="UniProtKB-SubCell"/>
</dbReference>
<dbReference type="GO" id="GO:0012511">
    <property type="term" value="C:monolayer-surrounded lipid storage body"/>
    <property type="evidence" value="ECO:0007669"/>
    <property type="project" value="InterPro"/>
</dbReference>
<dbReference type="GO" id="GO:0019915">
    <property type="term" value="P:lipid storage"/>
    <property type="evidence" value="ECO:0007669"/>
    <property type="project" value="TreeGrafter"/>
</dbReference>
<dbReference type="GO" id="GO:0050826">
    <property type="term" value="P:response to freezing"/>
    <property type="evidence" value="ECO:0007669"/>
    <property type="project" value="TreeGrafter"/>
</dbReference>
<dbReference type="GO" id="GO:0010344">
    <property type="term" value="P:seed oilbody biogenesis"/>
    <property type="evidence" value="ECO:0007669"/>
    <property type="project" value="TreeGrafter"/>
</dbReference>
<dbReference type="InterPro" id="IPR000136">
    <property type="entry name" value="Oleosin"/>
</dbReference>
<dbReference type="PANTHER" id="PTHR33203">
    <property type="entry name" value="OLEOSIN"/>
    <property type="match status" value="1"/>
</dbReference>
<dbReference type="PANTHER" id="PTHR33203:SF44">
    <property type="entry name" value="OLEOSIN 20.3 KDA"/>
    <property type="match status" value="1"/>
</dbReference>
<dbReference type="Pfam" id="PF01277">
    <property type="entry name" value="Oleosin"/>
    <property type="match status" value="1"/>
</dbReference>
<evidence type="ECO:0000255" key="1"/>
<evidence type="ECO:0000269" key="2">
    <source>
    </source>
</evidence>
<evidence type="ECO:0000303" key="3">
    <source>
    </source>
</evidence>
<evidence type="ECO:0000305" key="4"/>
<evidence type="ECO:0000312" key="5">
    <source>
        <dbReference type="EMBL" id="AAU21500.1"/>
    </source>
</evidence>